<accession>Q323P9</accession>
<sequence>MKIAILSRDGTLYSCKRLREAAIQRGHLVEILDPLSCYMNINPAASSIHYKGRKLPHFDAVIPRIGTAITFYGTAALRQFEMLGSYPLNESVAIARARDKLRSMQLLARQGIDLPVTGIVHSPDDTSDLIDMVGGAPLVVKLVEGTQGIGVVLAETRQAAESVIDAFRGLNAHILVQEYIKEAQGCDIRCLVVGDEVVAAIERRAKEGDFRSNLHRGGAASVASITPQEREIAIKAARTMALDVAGVDILRANRGPLVMEVNASPGLEGIEKTTGIDIAGKMIRWIERYATTEYCLKTGG</sequence>
<keyword id="KW-0067">ATP-binding</keyword>
<keyword id="KW-0436">Ligase</keyword>
<keyword id="KW-0460">Magnesium</keyword>
<keyword id="KW-0464">Manganese</keyword>
<keyword id="KW-0479">Metal-binding</keyword>
<keyword id="KW-0547">Nucleotide-binding</keyword>
<keyword id="KW-0648">Protein biosynthesis</keyword>
<proteinExistence type="inferred from homology"/>
<organism>
    <name type="scientific">Shigella boydii serotype 4 (strain Sb227)</name>
    <dbReference type="NCBI Taxonomy" id="300268"/>
    <lineage>
        <taxon>Bacteria</taxon>
        <taxon>Pseudomonadati</taxon>
        <taxon>Pseudomonadota</taxon>
        <taxon>Gammaproteobacteria</taxon>
        <taxon>Enterobacterales</taxon>
        <taxon>Enterobacteriaceae</taxon>
        <taxon>Shigella</taxon>
    </lineage>
</organism>
<gene>
    <name evidence="1" type="primary">rimK</name>
    <name type="ordered locus">SBO_0786</name>
</gene>
<protein>
    <recommendedName>
        <fullName evidence="1">Ribosomal protein bS6--L-glutamate ligase</fullName>
        <ecNumber evidence="1">6.3.2.-</ecNumber>
    </recommendedName>
    <alternativeName>
        <fullName evidence="1">Poly-alpha-glutamate synthase</fullName>
    </alternativeName>
    <alternativeName>
        <fullName evidence="1">Ribosomal protein bS6 modification protein</fullName>
    </alternativeName>
</protein>
<evidence type="ECO:0000255" key="1">
    <source>
        <dbReference type="HAMAP-Rule" id="MF_01552"/>
    </source>
</evidence>
<feature type="chain" id="PRO_1000068857" description="Ribosomal protein bS6--L-glutamate ligase">
    <location>
        <begin position="1"/>
        <end position="300"/>
    </location>
</feature>
<feature type="domain" description="ATP-grasp" evidence="1">
    <location>
        <begin position="104"/>
        <end position="287"/>
    </location>
</feature>
<feature type="binding site" evidence="1">
    <location>
        <position position="141"/>
    </location>
    <ligand>
        <name>ATP</name>
        <dbReference type="ChEBI" id="CHEBI:30616"/>
    </ligand>
</feature>
<feature type="binding site" evidence="1">
    <location>
        <begin position="178"/>
        <end position="179"/>
    </location>
    <ligand>
        <name>ATP</name>
        <dbReference type="ChEBI" id="CHEBI:30616"/>
    </ligand>
</feature>
<feature type="binding site" evidence="1">
    <location>
        <position position="187"/>
    </location>
    <ligand>
        <name>ATP</name>
        <dbReference type="ChEBI" id="CHEBI:30616"/>
    </ligand>
</feature>
<feature type="binding site" evidence="1">
    <location>
        <begin position="211"/>
        <end position="213"/>
    </location>
    <ligand>
        <name>ATP</name>
        <dbReference type="ChEBI" id="CHEBI:30616"/>
    </ligand>
</feature>
<feature type="binding site" evidence="1">
    <location>
        <position position="248"/>
    </location>
    <ligand>
        <name>Mg(2+)</name>
        <dbReference type="ChEBI" id="CHEBI:18420"/>
        <label>1</label>
    </ligand>
</feature>
<feature type="binding site" evidence="1">
    <location>
        <position position="248"/>
    </location>
    <ligand>
        <name>Mn(2+)</name>
        <dbReference type="ChEBI" id="CHEBI:29035"/>
        <label>1</label>
    </ligand>
</feature>
<feature type="binding site" evidence="1">
    <location>
        <position position="260"/>
    </location>
    <ligand>
        <name>Mg(2+)</name>
        <dbReference type="ChEBI" id="CHEBI:18420"/>
        <label>1</label>
    </ligand>
</feature>
<feature type="binding site" evidence="1">
    <location>
        <position position="260"/>
    </location>
    <ligand>
        <name>Mg(2+)</name>
        <dbReference type="ChEBI" id="CHEBI:18420"/>
        <label>2</label>
    </ligand>
</feature>
<feature type="binding site" evidence="1">
    <location>
        <position position="260"/>
    </location>
    <ligand>
        <name>Mn(2+)</name>
        <dbReference type="ChEBI" id="CHEBI:29035"/>
        <label>1</label>
    </ligand>
</feature>
<feature type="binding site" evidence="1">
    <location>
        <position position="260"/>
    </location>
    <ligand>
        <name>Mn(2+)</name>
        <dbReference type="ChEBI" id="CHEBI:29035"/>
        <label>2</label>
    </ligand>
</feature>
<feature type="binding site" evidence="1">
    <location>
        <position position="262"/>
    </location>
    <ligand>
        <name>Mg(2+)</name>
        <dbReference type="ChEBI" id="CHEBI:18420"/>
        <label>2</label>
    </ligand>
</feature>
<feature type="binding site" evidence="1">
    <location>
        <position position="262"/>
    </location>
    <ligand>
        <name>Mn(2+)</name>
        <dbReference type="ChEBI" id="CHEBI:29035"/>
        <label>2</label>
    </ligand>
</feature>
<dbReference type="EC" id="6.3.2.-" evidence="1"/>
<dbReference type="EMBL" id="CP000036">
    <property type="protein sequence ID" value="ABB65459.1"/>
    <property type="molecule type" value="Genomic_DNA"/>
</dbReference>
<dbReference type="RefSeq" id="WP_000684344.1">
    <property type="nucleotide sequence ID" value="NC_007613.1"/>
</dbReference>
<dbReference type="SMR" id="Q323P9"/>
<dbReference type="KEGG" id="sbo:SBO_0786"/>
<dbReference type="HOGENOM" id="CLU_054353_0_1_6"/>
<dbReference type="Proteomes" id="UP000007067">
    <property type="component" value="Chromosome"/>
</dbReference>
<dbReference type="GO" id="GO:0005737">
    <property type="term" value="C:cytoplasm"/>
    <property type="evidence" value="ECO:0007669"/>
    <property type="project" value="TreeGrafter"/>
</dbReference>
<dbReference type="GO" id="GO:0005524">
    <property type="term" value="F:ATP binding"/>
    <property type="evidence" value="ECO:0007669"/>
    <property type="project" value="UniProtKB-UniRule"/>
</dbReference>
<dbReference type="GO" id="GO:0046872">
    <property type="term" value="F:metal ion binding"/>
    <property type="evidence" value="ECO:0007669"/>
    <property type="project" value="UniProtKB-KW"/>
</dbReference>
<dbReference type="GO" id="GO:0018169">
    <property type="term" value="F:ribosomal S6-glutamic acid ligase activity"/>
    <property type="evidence" value="ECO:0007669"/>
    <property type="project" value="UniProtKB-UniRule"/>
</dbReference>
<dbReference type="GO" id="GO:0036211">
    <property type="term" value="P:protein modification process"/>
    <property type="evidence" value="ECO:0007669"/>
    <property type="project" value="InterPro"/>
</dbReference>
<dbReference type="GO" id="GO:0009432">
    <property type="term" value="P:SOS response"/>
    <property type="evidence" value="ECO:0007669"/>
    <property type="project" value="TreeGrafter"/>
</dbReference>
<dbReference type="GO" id="GO:0006412">
    <property type="term" value="P:translation"/>
    <property type="evidence" value="ECO:0007669"/>
    <property type="project" value="UniProtKB-KW"/>
</dbReference>
<dbReference type="FunFam" id="3.40.50.20:FF:000004">
    <property type="entry name" value="Probable alpha-L-glutamate ligase"/>
    <property type="match status" value="1"/>
</dbReference>
<dbReference type="FunFam" id="3.30.1490.20:FF:000005">
    <property type="entry name" value="Probable alpha-L-glutamate ligase 1"/>
    <property type="match status" value="1"/>
</dbReference>
<dbReference type="FunFam" id="3.30.470.20:FF:000016">
    <property type="entry name" value="Ribosomal protein S6--L-glutamate ligase"/>
    <property type="match status" value="1"/>
</dbReference>
<dbReference type="Gene3D" id="3.40.50.20">
    <property type="match status" value="1"/>
</dbReference>
<dbReference type="Gene3D" id="3.30.1490.20">
    <property type="entry name" value="ATP-grasp fold, A domain"/>
    <property type="match status" value="1"/>
</dbReference>
<dbReference type="Gene3D" id="3.30.470.20">
    <property type="entry name" value="ATP-grasp fold, B domain"/>
    <property type="match status" value="1"/>
</dbReference>
<dbReference type="HAMAP" id="MF_01552">
    <property type="entry name" value="RimK"/>
    <property type="match status" value="1"/>
</dbReference>
<dbReference type="InterPro" id="IPR011761">
    <property type="entry name" value="ATP-grasp"/>
</dbReference>
<dbReference type="InterPro" id="IPR013651">
    <property type="entry name" value="ATP-grasp_RimK-type"/>
</dbReference>
<dbReference type="InterPro" id="IPR013815">
    <property type="entry name" value="ATP_grasp_subdomain_1"/>
</dbReference>
<dbReference type="InterPro" id="IPR023533">
    <property type="entry name" value="RimK"/>
</dbReference>
<dbReference type="InterPro" id="IPR041107">
    <property type="entry name" value="Rimk_N"/>
</dbReference>
<dbReference type="InterPro" id="IPR004666">
    <property type="entry name" value="Rp_bS6_RimK/Lys_biosynth_LsyX"/>
</dbReference>
<dbReference type="NCBIfam" id="NF007764">
    <property type="entry name" value="PRK10446.1"/>
    <property type="match status" value="1"/>
</dbReference>
<dbReference type="NCBIfam" id="TIGR00768">
    <property type="entry name" value="rimK_fam"/>
    <property type="match status" value="1"/>
</dbReference>
<dbReference type="PANTHER" id="PTHR21621:SF7">
    <property type="entry name" value="RIBOSOMAL PROTEIN BS6--L-GLUTAMATE LIGASE"/>
    <property type="match status" value="1"/>
</dbReference>
<dbReference type="PANTHER" id="PTHR21621">
    <property type="entry name" value="RIBOSOMAL PROTEIN S6 MODIFICATION PROTEIN"/>
    <property type="match status" value="1"/>
</dbReference>
<dbReference type="Pfam" id="PF08443">
    <property type="entry name" value="RimK"/>
    <property type="match status" value="1"/>
</dbReference>
<dbReference type="Pfam" id="PF18030">
    <property type="entry name" value="Rimk_N"/>
    <property type="match status" value="1"/>
</dbReference>
<dbReference type="SUPFAM" id="SSF56059">
    <property type="entry name" value="Glutathione synthetase ATP-binding domain-like"/>
    <property type="match status" value="1"/>
</dbReference>
<dbReference type="PROSITE" id="PS50975">
    <property type="entry name" value="ATP_GRASP"/>
    <property type="match status" value="1"/>
</dbReference>
<name>RIMK_SHIBS</name>
<comment type="function">
    <text evidence="1">An L-glutamate ligase that catalyzes the ATP-dependent post-translational addition of glutamate residues to the C-terminus of ribosomal protein bS6 (RpsF). Is also able to catalyze the synthesis of poly-alpha-glutamate in vitro, via ATP hydrolysis from unprotected glutamate as substrate. The number of glutamate residues added to either RpsF or to poly-alpha-glutamate changes with pH.</text>
</comment>
<comment type="cofactor">
    <cofactor evidence="1">
        <name>Mg(2+)</name>
        <dbReference type="ChEBI" id="CHEBI:18420"/>
    </cofactor>
    <cofactor evidence="1">
        <name>Mn(2+)</name>
        <dbReference type="ChEBI" id="CHEBI:29035"/>
    </cofactor>
    <text evidence="1">Binds 2 magnesium or manganese ions per subunit.</text>
</comment>
<comment type="similarity">
    <text evidence="1">Belongs to the RimK family.</text>
</comment>
<reference key="1">
    <citation type="journal article" date="2005" name="Nucleic Acids Res.">
        <title>Genome dynamics and diversity of Shigella species, the etiologic agents of bacillary dysentery.</title>
        <authorList>
            <person name="Yang F."/>
            <person name="Yang J."/>
            <person name="Zhang X."/>
            <person name="Chen L."/>
            <person name="Jiang Y."/>
            <person name="Yan Y."/>
            <person name="Tang X."/>
            <person name="Wang J."/>
            <person name="Xiong Z."/>
            <person name="Dong J."/>
            <person name="Xue Y."/>
            <person name="Zhu Y."/>
            <person name="Xu X."/>
            <person name="Sun L."/>
            <person name="Chen S."/>
            <person name="Nie H."/>
            <person name="Peng J."/>
            <person name="Xu J."/>
            <person name="Wang Y."/>
            <person name="Yuan Z."/>
            <person name="Wen Y."/>
            <person name="Yao Z."/>
            <person name="Shen Y."/>
            <person name="Qiang B."/>
            <person name="Hou Y."/>
            <person name="Yu J."/>
            <person name="Jin Q."/>
        </authorList>
    </citation>
    <scope>NUCLEOTIDE SEQUENCE [LARGE SCALE GENOMIC DNA]</scope>
    <source>
        <strain>Sb227</strain>
    </source>
</reference>